<sequence length="458" mass="48410">MSLWDAIVIGAGPAGIGASGLLAENGAKVLVIDEAPGPGGQIWRGVEDVSDARARILGSDYLAGRDEVRRLRASGAELSFETQAWRVEPEGTVWLKDSHGIRRERGRRLLIATGAMERPCPLDGWTLPGVTTVGGLQILLKREGMLPGGPLVLIGTGPLFYLFAAQCLAAGMRDLSLIDTAAAGAIVSALRHVPAALTGKGPSYLIKGLKLLWMLRRAGVDIYNHSGDLRIKSAADGLEVHFRMREVEHRLSASHVGLHEGVIPETHLPRALGCRMHWSEAGGAFHPHRDIHLQSSVAGVYIAGDAGGIGGATVALLEGRLAAMGILASLGRPIDELLLRATRRDRAAHLAARPLLDHLYQPSPAILTPADGVLACRCEEVTCGEIRAALRAGCAGPNQVKAFLRCGMGPCQGRMCGMTLTSLAASTHDISMGDAGFLTIRPPLRPISLGEVADLVEP</sequence>
<feature type="chain" id="PRO_0000058050" description="Opine oxidase subunit A">
    <location>
        <begin position="1"/>
        <end position="458"/>
    </location>
</feature>
<proteinExistence type="inferred from homology"/>
<protein>
    <recommendedName>
        <fullName>Opine oxidase subunit A</fullName>
        <ecNumber>1.-.-.-</ecNumber>
    </recommendedName>
    <alternativeName>
        <fullName>Octopine oxidase subunit A</fullName>
    </alternativeName>
</protein>
<accession>Q92XP4</accession>
<comment type="function">
    <text evidence="1">Oxidative cleavage of octopine into L-arginine and pyruvate.</text>
</comment>
<comment type="pathway">
    <text>Opine metabolism; octopine degradation.</text>
</comment>
<comment type="subunit">
    <text evidence="1">Heterodimer of a subunit A and a subunit B.</text>
</comment>
<comment type="similarity">
    <text evidence="2">To T-protein and to dimethylglycine dehydrogenase.</text>
</comment>
<name>OOXA_RHIME</name>
<evidence type="ECO:0000250" key="1"/>
<evidence type="ECO:0000305" key="2"/>
<reference key="1">
    <citation type="journal article" date="2001" name="Proc. Natl. Acad. Sci. U.S.A.">
        <title>Nucleotide sequence and predicted functions of the entire Sinorhizobium meliloti pSymA megaplasmid.</title>
        <authorList>
            <person name="Barnett M.J."/>
            <person name="Fisher R.F."/>
            <person name="Jones T."/>
            <person name="Komp C."/>
            <person name="Abola A.P."/>
            <person name="Barloy-Hubler F."/>
            <person name="Bowser L."/>
            <person name="Capela D."/>
            <person name="Galibert F."/>
            <person name="Gouzy J."/>
            <person name="Gurjal M."/>
            <person name="Hong A."/>
            <person name="Huizar L."/>
            <person name="Hyman R.W."/>
            <person name="Kahn D."/>
            <person name="Kahn M.L."/>
            <person name="Kalman S."/>
            <person name="Keating D.H."/>
            <person name="Palm C."/>
            <person name="Peck M.C."/>
            <person name="Surzycki R."/>
            <person name="Wells D.H."/>
            <person name="Yeh K.-C."/>
            <person name="Davis R.W."/>
            <person name="Federspiel N.A."/>
            <person name="Long S.R."/>
        </authorList>
    </citation>
    <scope>NUCLEOTIDE SEQUENCE [LARGE SCALE GENOMIC DNA]</scope>
    <source>
        <strain>1021</strain>
    </source>
</reference>
<reference key="2">
    <citation type="journal article" date="2001" name="Science">
        <title>The composite genome of the legume symbiont Sinorhizobium meliloti.</title>
        <authorList>
            <person name="Galibert F."/>
            <person name="Finan T.M."/>
            <person name="Long S.R."/>
            <person name="Puehler A."/>
            <person name="Abola P."/>
            <person name="Ampe F."/>
            <person name="Barloy-Hubler F."/>
            <person name="Barnett M.J."/>
            <person name="Becker A."/>
            <person name="Boistard P."/>
            <person name="Bothe G."/>
            <person name="Boutry M."/>
            <person name="Bowser L."/>
            <person name="Buhrmester J."/>
            <person name="Cadieu E."/>
            <person name="Capela D."/>
            <person name="Chain P."/>
            <person name="Cowie A."/>
            <person name="Davis R.W."/>
            <person name="Dreano S."/>
            <person name="Federspiel N.A."/>
            <person name="Fisher R.F."/>
            <person name="Gloux S."/>
            <person name="Godrie T."/>
            <person name="Goffeau A."/>
            <person name="Golding B."/>
            <person name="Gouzy J."/>
            <person name="Gurjal M."/>
            <person name="Hernandez-Lucas I."/>
            <person name="Hong A."/>
            <person name="Huizar L."/>
            <person name="Hyman R.W."/>
            <person name="Jones T."/>
            <person name="Kahn D."/>
            <person name="Kahn M.L."/>
            <person name="Kalman S."/>
            <person name="Keating D.H."/>
            <person name="Kiss E."/>
            <person name="Komp C."/>
            <person name="Lelaure V."/>
            <person name="Masuy D."/>
            <person name="Palm C."/>
            <person name="Peck M.C."/>
            <person name="Pohl T.M."/>
            <person name="Portetelle D."/>
            <person name="Purnelle B."/>
            <person name="Ramsperger U."/>
            <person name="Surzycki R."/>
            <person name="Thebault P."/>
            <person name="Vandenbol M."/>
            <person name="Vorhoelter F.J."/>
            <person name="Weidner S."/>
            <person name="Wells D.H."/>
            <person name="Wong K."/>
            <person name="Yeh K.-C."/>
            <person name="Batut J."/>
        </authorList>
    </citation>
    <scope>NUCLEOTIDE SEQUENCE [LARGE SCALE GENOMIC DNA]</scope>
    <source>
        <strain>1021</strain>
    </source>
</reference>
<keyword id="KW-0560">Oxidoreductase</keyword>
<keyword id="KW-0614">Plasmid</keyword>
<keyword id="KW-1185">Reference proteome</keyword>
<organism>
    <name type="scientific">Rhizobium meliloti (strain 1021)</name>
    <name type="common">Ensifer meliloti</name>
    <name type="synonym">Sinorhizobium meliloti</name>
    <dbReference type="NCBI Taxonomy" id="266834"/>
    <lineage>
        <taxon>Bacteria</taxon>
        <taxon>Pseudomonadati</taxon>
        <taxon>Pseudomonadota</taxon>
        <taxon>Alphaproteobacteria</taxon>
        <taxon>Hyphomicrobiales</taxon>
        <taxon>Rhizobiaceae</taxon>
        <taxon>Sinorhizobium/Ensifer group</taxon>
        <taxon>Sinorhizobium</taxon>
    </lineage>
</organism>
<geneLocation type="plasmid">
    <name>pSymA</name>
    <name>megaplasmid 1</name>
</geneLocation>
<dbReference type="EC" id="1.-.-.-"/>
<dbReference type="EMBL" id="AE006469">
    <property type="protein sequence ID" value="AAK65858.1"/>
    <property type="molecule type" value="Genomic_DNA"/>
</dbReference>
<dbReference type="PIR" id="H95411">
    <property type="entry name" value="H95411"/>
</dbReference>
<dbReference type="RefSeq" id="NP_436446.1">
    <property type="nucleotide sequence ID" value="NC_003037.1"/>
</dbReference>
<dbReference type="RefSeq" id="WP_010968148.1">
    <property type="nucleotide sequence ID" value="NC_003037.1"/>
</dbReference>
<dbReference type="SMR" id="Q92XP4"/>
<dbReference type="EnsemblBacteria" id="AAK65858">
    <property type="protein sequence ID" value="AAK65858"/>
    <property type="gene ID" value="SMa2225"/>
</dbReference>
<dbReference type="KEGG" id="sme:SMa2225"/>
<dbReference type="PATRIC" id="fig|266834.11.peg.1255"/>
<dbReference type="HOGENOM" id="CLU_030705_1_0_5"/>
<dbReference type="OrthoDB" id="9801699at2"/>
<dbReference type="UniPathway" id="UPA00737"/>
<dbReference type="Proteomes" id="UP000001976">
    <property type="component" value="Plasmid pSymA"/>
</dbReference>
<dbReference type="GO" id="GO:0016491">
    <property type="term" value="F:oxidoreductase activity"/>
    <property type="evidence" value="ECO:0007669"/>
    <property type="project" value="UniProtKB-KW"/>
</dbReference>
<dbReference type="CDD" id="cd19946">
    <property type="entry name" value="GlpA-like_Fer2_BFD-like"/>
    <property type="match status" value="1"/>
</dbReference>
<dbReference type="Gene3D" id="1.10.10.1100">
    <property type="entry name" value="BFD-like [2Fe-2S]-binding domain"/>
    <property type="match status" value="1"/>
</dbReference>
<dbReference type="Gene3D" id="3.50.50.60">
    <property type="entry name" value="FAD/NAD(P)-binding domain"/>
    <property type="match status" value="2"/>
</dbReference>
<dbReference type="InterPro" id="IPR041854">
    <property type="entry name" value="BFD-like_2Fe2S-bd_dom_sf"/>
</dbReference>
<dbReference type="InterPro" id="IPR036188">
    <property type="entry name" value="FAD/NAD-bd_sf"/>
</dbReference>
<dbReference type="InterPro" id="IPR023753">
    <property type="entry name" value="FAD/NAD-binding_dom"/>
</dbReference>
<dbReference type="InterPro" id="IPR051691">
    <property type="entry name" value="Metab_Enz_Cyan_OpOx_G3PDH"/>
</dbReference>
<dbReference type="InterPro" id="IPR017224">
    <property type="entry name" value="Opine_Oxase_asu/HCN_bsu"/>
</dbReference>
<dbReference type="InterPro" id="IPR041117">
    <property type="entry name" value="SoxA_A3"/>
</dbReference>
<dbReference type="PANTHER" id="PTHR42949">
    <property type="entry name" value="ANAEROBIC GLYCEROL-3-PHOSPHATE DEHYDROGENASE SUBUNIT B"/>
    <property type="match status" value="1"/>
</dbReference>
<dbReference type="PANTHER" id="PTHR42949:SF3">
    <property type="entry name" value="ANAEROBIC GLYCEROL-3-PHOSPHATE DEHYDROGENASE SUBUNIT B"/>
    <property type="match status" value="1"/>
</dbReference>
<dbReference type="Pfam" id="PF07992">
    <property type="entry name" value="Pyr_redox_2"/>
    <property type="match status" value="1"/>
</dbReference>
<dbReference type="Pfam" id="PF17806">
    <property type="entry name" value="SO_alpha_A3"/>
    <property type="match status" value="1"/>
</dbReference>
<dbReference type="PIRSF" id="PIRSF037495">
    <property type="entry name" value="Opine_OX_OoxA/HcnB"/>
    <property type="match status" value="1"/>
</dbReference>
<dbReference type="PRINTS" id="PR00368">
    <property type="entry name" value="FADPNR"/>
</dbReference>
<dbReference type="PRINTS" id="PR00469">
    <property type="entry name" value="PNDRDTASEII"/>
</dbReference>
<dbReference type="SUPFAM" id="SSF51905">
    <property type="entry name" value="FAD/NAD(P)-binding domain"/>
    <property type="match status" value="1"/>
</dbReference>
<gene>
    <name type="primary">ooxA</name>
    <name type="ordered locus">RA1200</name>
    <name type="ORF">SMa2225</name>
</gene>